<proteinExistence type="evidence at protein level"/>
<feature type="initiator methionine" description="Removed" evidence="2">
    <location>
        <position position="1"/>
    </location>
</feature>
<feature type="chain" id="PRO_0000067036" description="Osteoclast-stimulating factor 1">
    <location>
        <begin position="2"/>
        <end position="215"/>
    </location>
</feature>
<feature type="domain" description="SH3" evidence="3">
    <location>
        <begin position="12"/>
        <end position="71"/>
    </location>
</feature>
<feature type="repeat" description="ANK 1">
    <location>
        <begin position="72"/>
        <end position="101"/>
    </location>
</feature>
<feature type="repeat" description="ANK 2">
    <location>
        <begin position="105"/>
        <end position="135"/>
    </location>
</feature>
<feature type="repeat" description="ANK 3">
    <location>
        <begin position="139"/>
        <end position="168"/>
    </location>
</feature>
<feature type="region of interest" description="Disordered" evidence="4">
    <location>
        <begin position="192"/>
        <end position="215"/>
    </location>
</feature>
<feature type="modified residue" description="N-acetylserine" evidence="2">
    <location>
        <position position="2"/>
    </location>
</feature>
<feature type="modified residue" description="Phosphothreonine" evidence="8">
    <location>
        <position position="201"/>
    </location>
</feature>
<feature type="modified residue" description="Phosphoserine" evidence="2">
    <location>
        <position position="203"/>
    </location>
</feature>
<feature type="modified residue" description="Phosphoserine" evidence="6 7 8 9">
    <location>
        <position position="214"/>
    </location>
</feature>
<reference key="1">
    <citation type="journal article" date="1996" name="Mol. Divers.">
        <title>Binding properties of SH3 peptide ligands identified from phage-displayed random peptide libraries.</title>
        <authorList>
            <person name="Hoffman N.G."/>
            <person name="Sparks A.B."/>
            <person name="Carter J.M."/>
            <person name="Kay B.K."/>
        </authorList>
    </citation>
    <scope>NUCLEOTIDE SEQUENCE [MRNA]</scope>
</reference>
<reference key="2">
    <citation type="journal article" date="1996" name="Nat. Biotechnol.">
        <title>Cloning of ligand targets: systematic isolation of SH3 domain-containing proteins.</title>
        <authorList>
            <person name="Sparks A.B."/>
            <person name="Hoffman N.G."/>
            <person name="McConnell S.J."/>
            <person name="Fowlkes D.M."/>
            <person name="Kay B.K."/>
        </authorList>
    </citation>
    <scope>NUCLEOTIDE SEQUENCE [MRNA]</scope>
    <source>
        <tissue>Embryo</tissue>
    </source>
</reference>
<reference key="3">
    <citation type="journal article" date="2005" name="Science">
        <title>The transcriptional landscape of the mammalian genome.</title>
        <authorList>
            <person name="Carninci P."/>
            <person name="Kasukawa T."/>
            <person name="Katayama S."/>
            <person name="Gough J."/>
            <person name="Frith M.C."/>
            <person name="Maeda N."/>
            <person name="Oyama R."/>
            <person name="Ravasi T."/>
            <person name="Lenhard B."/>
            <person name="Wells C."/>
            <person name="Kodzius R."/>
            <person name="Shimokawa K."/>
            <person name="Bajic V.B."/>
            <person name="Brenner S.E."/>
            <person name="Batalov S."/>
            <person name="Forrest A.R."/>
            <person name="Zavolan M."/>
            <person name="Davis M.J."/>
            <person name="Wilming L.G."/>
            <person name="Aidinis V."/>
            <person name="Allen J.E."/>
            <person name="Ambesi-Impiombato A."/>
            <person name="Apweiler R."/>
            <person name="Aturaliya R.N."/>
            <person name="Bailey T.L."/>
            <person name="Bansal M."/>
            <person name="Baxter L."/>
            <person name="Beisel K.W."/>
            <person name="Bersano T."/>
            <person name="Bono H."/>
            <person name="Chalk A.M."/>
            <person name="Chiu K.P."/>
            <person name="Choudhary V."/>
            <person name="Christoffels A."/>
            <person name="Clutterbuck D.R."/>
            <person name="Crowe M.L."/>
            <person name="Dalla E."/>
            <person name="Dalrymple B.P."/>
            <person name="de Bono B."/>
            <person name="Della Gatta G."/>
            <person name="di Bernardo D."/>
            <person name="Down T."/>
            <person name="Engstrom P."/>
            <person name="Fagiolini M."/>
            <person name="Faulkner G."/>
            <person name="Fletcher C.F."/>
            <person name="Fukushima T."/>
            <person name="Furuno M."/>
            <person name="Futaki S."/>
            <person name="Gariboldi M."/>
            <person name="Georgii-Hemming P."/>
            <person name="Gingeras T.R."/>
            <person name="Gojobori T."/>
            <person name="Green R.E."/>
            <person name="Gustincich S."/>
            <person name="Harbers M."/>
            <person name="Hayashi Y."/>
            <person name="Hensch T.K."/>
            <person name="Hirokawa N."/>
            <person name="Hill D."/>
            <person name="Huminiecki L."/>
            <person name="Iacono M."/>
            <person name="Ikeo K."/>
            <person name="Iwama A."/>
            <person name="Ishikawa T."/>
            <person name="Jakt M."/>
            <person name="Kanapin A."/>
            <person name="Katoh M."/>
            <person name="Kawasawa Y."/>
            <person name="Kelso J."/>
            <person name="Kitamura H."/>
            <person name="Kitano H."/>
            <person name="Kollias G."/>
            <person name="Krishnan S.P."/>
            <person name="Kruger A."/>
            <person name="Kummerfeld S.K."/>
            <person name="Kurochkin I.V."/>
            <person name="Lareau L.F."/>
            <person name="Lazarevic D."/>
            <person name="Lipovich L."/>
            <person name="Liu J."/>
            <person name="Liuni S."/>
            <person name="McWilliam S."/>
            <person name="Madan Babu M."/>
            <person name="Madera M."/>
            <person name="Marchionni L."/>
            <person name="Matsuda H."/>
            <person name="Matsuzawa S."/>
            <person name="Miki H."/>
            <person name="Mignone F."/>
            <person name="Miyake S."/>
            <person name="Morris K."/>
            <person name="Mottagui-Tabar S."/>
            <person name="Mulder N."/>
            <person name="Nakano N."/>
            <person name="Nakauchi H."/>
            <person name="Ng P."/>
            <person name="Nilsson R."/>
            <person name="Nishiguchi S."/>
            <person name="Nishikawa S."/>
            <person name="Nori F."/>
            <person name="Ohara O."/>
            <person name="Okazaki Y."/>
            <person name="Orlando V."/>
            <person name="Pang K.C."/>
            <person name="Pavan W.J."/>
            <person name="Pavesi G."/>
            <person name="Pesole G."/>
            <person name="Petrovsky N."/>
            <person name="Piazza S."/>
            <person name="Reed J."/>
            <person name="Reid J.F."/>
            <person name="Ring B.Z."/>
            <person name="Ringwald M."/>
            <person name="Rost B."/>
            <person name="Ruan Y."/>
            <person name="Salzberg S.L."/>
            <person name="Sandelin A."/>
            <person name="Schneider C."/>
            <person name="Schoenbach C."/>
            <person name="Sekiguchi K."/>
            <person name="Semple C.A."/>
            <person name="Seno S."/>
            <person name="Sessa L."/>
            <person name="Sheng Y."/>
            <person name="Shibata Y."/>
            <person name="Shimada H."/>
            <person name="Shimada K."/>
            <person name="Silva D."/>
            <person name="Sinclair B."/>
            <person name="Sperling S."/>
            <person name="Stupka E."/>
            <person name="Sugiura K."/>
            <person name="Sultana R."/>
            <person name="Takenaka Y."/>
            <person name="Taki K."/>
            <person name="Tammoja K."/>
            <person name="Tan S.L."/>
            <person name="Tang S."/>
            <person name="Taylor M.S."/>
            <person name="Tegner J."/>
            <person name="Teichmann S.A."/>
            <person name="Ueda H.R."/>
            <person name="van Nimwegen E."/>
            <person name="Verardo R."/>
            <person name="Wei C.L."/>
            <person name="Yagi K."/>
            <person name="Yamanishi H."/>
            <person name="Zabarovsky E."/>
            <person name="Zhu S."/>
            <person name="Zimmer A."/>
            <person name="Hide W."/>
            <person name="Bult C."/>
            <person name="Grimmond S.M."/>
            <person name="Teasdale R.D."/>
            <person name="Liu E.T."/>
            <person name="Brusic V."/>
            <person name="Quackenbush J."/>
            <person name="Wahlestedt C."/>
            <person name="Mattick J.S."/>
            <person name="Hume D.A."/>
            <person name="Kai C."/>
            <person name="Sasaki D."/>
            <person name="Tomaru Y."/>
            <person name="Fukuda S."/>
            <person name="Kanamori-Katayama M."/>
            <person name="Suzuki M."/>
            <person name="Aoki J."/>
            <person name="Arakawa T."/>
            <person name="Iida J."/>
            <person name="Imamura K."/>
            <person name="Itoh M."/>
            <person name="Kato T."/>
            <person name="Kawaji H."/>
            <person name="Kawagashira N."/>
            <person name="Kawashima T."/>
            <person name="Kojima M."/>
            <person name="Kondo S."/>
            <person name="Konno H."/>
            <person name="Nakano K."/>
            <person name="Ninomiya N."/>
            <person name="Nishio T."/>
            <person name="Okada M."/>
            <person name="Plessy C."/>
            <person name="Shibata K."/>
            <person name="Shiraki T."/>
            <person name="Suzuki S."/>
            <person name="Tagami M."/>
            <person name="Waki K."/>
            <person name="Watahiki A."/>
            <person name="Okamura-Oho Y."/>
            <person name="Suzuki H."/>
            <person name="Kawai J."/>
            <person name="Hayashizaki Y."/>
        </authorList>
    </citation>
    <scope>NUCLEOTIDE SEQUENCE [LARGE SCALE MRNA]</scope>
    <source>
        <strain>C57BL/6J</strain>
        <strain>NOD</strain>
        <tissue>Bone marrow</tissue>
        <tissue>Kidney</tissue>
        <tissue>Placenta</tissue>
        <tissue>Small intestine</tissue>
        <tissue>Sympathetic ganglion</tissue>
        <tissue>Tongue</tissue>
    </source>
</reference>
<reference key="4">
    <citation type="journal article" date="2004" name="Genome Res.">
        <title>The status, quality, and expansion of the NIH full-length cDNA project: the Mammalian Gene Collection (MGC).</title>
        <authorList>
            <consortium name="The MGC Project Team"/>
        </authorList>
    </citation>
    <scope>NUCLEOTIDE SEQUENCE [LARGE SCALE MRNA]</scope>
    <source>
        <tissue>Heart</tissue>
        <tissue>Lung</tissue>
    </source>
</reference>
<reference key="5">
    <citation type="journal article" date="2008" name="J. Proteome Res.">
        <title>Specific phosphopeptide enrichment with immobilized titanium ion affinity chromatography adsorbent for phosphoproteome analysis.</title>
        <authorList>
            <person name="Zhou H."/>
            <person name="Ye M."/>
            <person name="Dong J."/>
            <person name="Han G."/>
            <person name="Jiang X."/>
            <person name="Wu R."/>
            <person name="Zou H."/>
        </authorList>
    </citation>
    <scope>PHOSPHORYLATION [LARGE SCALE ANALYSIS] AT SER-214</scope>
    <scope>IDENTIFICATION BY MASS SPECTROMETRY [LARGE SCALE ANALYSIS]</scope>
    <source>
        <tissue>Liver</tissue>
    </source>
</reference>
<reference key="6">
    <citation type="journal article" date="2009" name="Immunity">
        <title>The phagosomal proteome in interferon-gamma-activated macrophages.</title>
        <authorList>
            <person name="Trost M."/>
            <person name="English L."/>
            <person name="Lemieux S."/>
            <person name="Courcelles M."/>
            <person name="Desjardins M."/>
            <person name="Thibault P."/>
        </authorList>
    </citation>
    <scope>PHOSPHORYLATION [LARGE SCALE ANALYSIS] AT THR-201 AND SER-214</scope>
    <scope>IDENTIFICATION BY MASS SPECTROMETRY [LARGE SCALE ANALYSIS]</scope>
</reference>
<reference key="7">
    <citation type="journal article" date="2009" name="Mol. Cell. Proteomics">
        <title>Large scale localization of protein phosphorylation by use of electron capture dissociation mass spectrometry.</title>
        <authorList>
            <person name="Sweet S.M."/>
            <person name="Bailey C.M."/>
            <person name="Cunningham D.L."/>
            <person name="Heath J.K."/>
            <person name="Cooper H.J."/>
        </authorList>
    </citation>
    <scope>PHOSPHORYLATION [LARGE SCALE ANALYSIS] AT SER-214</scope>
    <scope>IDENTIFICATION BY MASS SPECTROMETRY [LARGE SCALE ANALYSIS]</scope>
    <source>
        <tissue>Embryonic fibroblast</tissue>
    </source>
</reference>
<reference key="8">
    <citation type="journal article" date="2010" name="Cell">
        <title>A tissue-specific atlas of mouse protein phosphorylation and expression.</title>
        <authorList>
            <person name="Huttlin E.L."/>
            <person name="Jedrychowski M.P."/>
            <person name="Elias J.E."/>
            <person name="Goswami T."/>
            <person name="Rad R."/>
            <person name="Beausoleil S.A."/>
            <person name="Villen J."/>
            <person name="Haas W."/>
            <person name="Sowa M.E."/>
            <person name="Gygi S.P."/>
        </authorList>
    </citation>
    <scope>PHOSPHORYLATION [LARGE SCALE ANALYSIS] AT SER-214</scope>
    <scope>IDENTIFICATION BY MASS SPECTROMETRY [LARGE SCALE ANALYSIS]</scope>
    <source>
        <tissue>Brain</tissue>
        <tissue>Brown adipose tissue</tissue>
        <tissue>Heart</tissue>
        <tissue>Kidney</tissue>
        <tissue>Liver</tissue>
        <tissue>Lung</tissue>
        <tissue>Pancreas</tissue>
        <tissue>Spleen</tissue>
        <tissue>Testis</tissue>
    </source>
</reference>
<accession>Q62422</accession>
<accession>Q3UF05</accession>
<gene>
    <name type="primary">Ostf1</name>
    <name type="synonym">Sh3d3</name>
    <name type="synonym">Sh3p2</name>
</gene>
<comment type="function">
    <text evidence="1">Induces bone resorption, acting probably through a signaling cascade which results in the secretion of factor(s) enhancing osteoclast formation and activity.</text>
</comment>
<comment type="subunit">
    <text evidence="1">Interacts with C-SRC and SMN1. Interacts with FASLG (By similarity).</text>
</comment>
<comment type="subcellular location">
    <subcellularLocation>
        <location evidence="5">Cytoplasm</location>
    </subcellularLocation>
</comment>
<comment type="domain">
    <text evidence="1">The SH3 domain mediates interaction with SMN1.</text>
</comment>
<comment type="sequence caution" evidence="5">
    <conflict type="erroneous initiation">
        <sequence resource="EMBL-CDS" id="AAC52641"/>
    </conflict>
</comment>
<evidence type="ECO:0000250" key="1"/>
<evidence type="ECO:0000250" key="2">
    <source>
        <dbReference type="UniProtKB" id="Q92882"/>
    </source>
</evidence>
<evidence type="ECO:0000255" key="3">
    <source>
        <dbReference type="PROSITE-ProRule" id="PRU00192"/>
    </source>
</evidence>
<evidence type="ECO:0000256" key="4">
    <source>
        <dbReference type="SAM" id="MobiDB-lite"/>
    </source>
</evidence>
<evidence type="ECO:0000305" key="5"/>
<evidence type="ECO:0007744" key="6">
    <source>
    </source>
</evidence>
<evidence type="ECO:0007744" key="7">
    <source>
    </source>
</evidence>
<evidence type="ECO:0007744" key="8">
    <source>
    </source>
</evidence>
<evidence type="ECO:0007744" key="9">
    <source>
    </source>
</evidence>
<sequence length="215" mass="23783">MSKPPPKPVKPGQVKVFRALYTFEPRTPDELYFEEGDIIYITDMSDTSWWKGTCKGRTGLIPSNYVAEQAESIDNPLHEAAKRGNLSWLRECLDNRVGVNGLDKAGSTALYWACHGGHKDIVEVLFTQPNVELNQQNKLGDTALHAAAWKGYADIVQLLLAKGARTDLRNNEKKLALDMATNAACASLLKKKQQGTDGARTLSNAEDYLDDEDSD</sequence>
<organism>
    <name type="scientific">Mus musculus</name>
    <name type="common">Mouse</name>
    <dbReference type="NCBI Taxonomy" id="10090"/>
    <lineage>
        <taxon>Eukaryota</taxon>
        <taxon>Metazoa</taxon>
        <taxon>Chordata</taxon>
        <taxon>Craniata</taxon>
        <taxon>Vertebrata</taxon>
        <taxon>Euteleostomi</taxon>
        <taxon>Mammalia</taxon>
        <taxon>Eutheria</taxon>
        <taxon>Euarchontoglires</taxon>
        <taxon>Glires</taxon>
        <taxon>Rodentia</taxon>
        <taxon>Myomorpha</taxon>
        <taxon>Muroidea</taxon>
        <taxon>Muridae</taxon>
        <taxon>Murinae</taxon>
        <taxon>Mus</taxon>
        <taxon>Mus</taxon>
    </lineage>
</organism>
<dbReference type="EMBL" id="U58888">
    <property type="protein sequence ID" value="AAC52641.1"/>
    <property type="status" value="ALT_INIT"/>
    <property type="molecule type" value="mRNA"/>
</dbReference>
<dbReference type="EMBL" id="AK002899">
    <property type="protein sequence ID" value="BAB22442.1"/>
    <property type="molecule type" value="mRNA"/>
</dbReference>
<dbReference type="EMBL" id="AK005525">
    <property type="protein sequence ID" value="BAB24098.1"/>
    <property type="molecule type" value="mRNA"/>
</dbReference>
<dbReference type="EMBL" id="AK008123">
    <property type="protein sequence ID" value="BAB25477.1"/>
    <property type="molecule type" value="mRNA"/>
</dbReference>
<dbReference type="EMBL" id="AK008467">
    <property type="protein sequence ID" value="BAB25685.1"/>
    <property type="molecule type" value="mRNA"/>
</dbReference>
<dbReference type="EMBL" id="AK010074">
    <property type="protein sequence ID" value="BAB26683.1"/>
    <property type="molecule type" value="mRNA"/>
</dbReference>
<dbReference type="EMBL" id="AK145949">
    <property type="protein sequence ID" value="BAE26777.1"/>
    <property type="molecule type" value="mRNA"/>
</dbReference>
<dbReference type="EMBL" id="AK149175">
    <property type="protein sequence ID" value="BAE28756.1"/>
    <property type="molecule type" value="mRNA"/>
</dbReference>
<dbReference type="EMBL" id="AK150145">
    <property type="protein sequence ID" value="BAE29340.1"/>
    <property type="molecule type" value="mRNA"/>
</dbReference>
<dbReference type="EMBL" id="AK155028">
    <property type="protein sequence ID" value="BAE33000.1"/>
    <property type="molecule type" value="mRNA"/>
</dbReference>
<dbReference type="EMBL" id="BC060986">
    <property type="protein sequence ID" value="AAH60986.1"/>
    <property type="molecule type" value="mRNA"/>
</dbReference>
<dbReference type="CCDS" id="CCDS37930.1"/>
<dbReference type="RefSeq" id="NP_059071.1">
    <property type="nucleotide sequence ID" value="NM_017375.3"/>
</dbReference>
<dbReference type="SMR" id="Q62422"/>
<dbReference type="BioGRID" id="203211">
    <property type="interactions" value="3"/>
</dbReference>
<dbReference type="FunCoup" id="Q62422">
    <property type="interactions" value="1316"/>
</dbReference>
<dbReference type="IntAct" id="Q62422">
    <property type="interactions" value="1"/>
</dbReference>
<dbReference type="MINT" id="Q62422"/>
<dbReference type="STRING" id="10090.ENSMUSP00000025631"/>
<dbReference type="GlyGen" id="Q62422">
    <property type="glycosylation" value="1 site, 1 N-linked glycan (1 site)"/>
</dbReference>
<dbReference type="iPTMnet" id="Q62422"/>
<dbReference type="PhosphoSitePlus" id="Q62422"/>
<dbReference type="SwissPalm" id="Q62422"/>
<dbReference type="jPOST" id="Q62422"/>
<dbReference type="PaxDb" id="10090-ENSMUSP00000025631"/>
<dbReference type="PeptideAtlas" id="Q62422"/>
<dbReference type="ProteomicsDB" id="294397"/>
<dbReference type="Pumba" id="Q62422"/>
<dbReference type="Antibodypedia" id="27176">
    <property type="antibodies" value="220 antibodies from 28 providers"/>
</dbReference>
<dbReference type="DNASU" id="20409"/>
<dbReference type="Ensembl" id="ENSMUST00000025631.7">
    <property type="protein sequence ID" value="ENSMUSP00000025631.7"/>
    <property type="gene ID" value="ENSMUSG00000024725.14"/>
</dbReference>
<dbReference type="GeneID" id="20409"/>
<dbReference type="KEGG" id="mmu:20409"/>
<dbReference type="UCSC" id="uc008gxs.2">
    <property type="organism name" value="mouse"/>
</dbReference>
<dbReference type="AGR" id="MGI:700012"/>
<dbReference type="CTD" id="26578"/>
<dbReference type="MGI" id="MGI:700012">
    <property type="gene designation" value="Ostf1"/>
</dbReference>
<dbReference type="VEuPathDB" id="HostDB:ENSMUSG00000024725"/>
<dbReference type="eggNOG" id="ENOG502QTZB">
    <property type="taxonomic scope" value="Eukaryota"/>
</dbReference>
<dbReference type="GeneTree" id="ENSGT00920000149159"/>
<dbReference type="HOGENOM" id="CLU_092255_0_0_1"/>
<dbReference type="InParanoid" id="Q62422"/>
<dbReference type="OMA" id="NMSWLRE"/>
<dbReference type="OrthoDB" id="207120at2759"/>
<dbReference type="PhylomeDB" id="Q62422"/>
<dbReference type="TreeFam" id="TF314534"/>
<dbReference type="Reactome" id="R-MMU-6798695">
    <property type="pathway name" value="Neutrophil degranulation"/>
</dbReference>
<dbReference type="BioGRID-ORCS" id="20409">
    <property type="hits" value="3 hits in 78 CRISPR screens"/>
</dbReference>
<dbReference type="ChiTaRS" id="Ostf1">
    <property type="organism name" value="mouse"/>
</dbReference>
<dbReference type="PRO" id="PR:Q62422"/>
<dbReference type="Proteomes" id="UP000000589">
    <property type="component" value="Chromosome 19"/>
</dbReference>
<dbReference type="RNAct" id="Q62422">
    <property type="molecule type" value="protein"/>
</dbReference>
<dbReference type="Bgee" id="ENSMUSG00000024725">
    <property type="expression patterns" value="Expressed in granulocyte and 250 other cell types or tissues"/>
</dbReference>
<dbReference type="ExpressionAtlas" id="Q62422">
    <property type="expression patterns" value="baseline and differential"/>
</dbReference>
<dbReference type="GO" id="GO:0005737">
    <property type="term" value="C:cytoplasm"/>
    <property type="evidence" value="ECO:0007669"/>
    <property type="project" value="UniProtKB-SubCell"/>
</dbReference>
<dbReference type="GO" id="GO:0017124">
    <property type="term" value="F:SH3 domain binding"/>
    <property type="evidence" value="ECO:0000314"/>
    <property type="project" value="MGI"/>
</dbReference>
<dbReference type="CDD" id="cd11772">
    <property type="entry name" value="SH3_OSTF1"/>
    <property type="match status" value="1"/>
</dbReference>
<dbReference type="FunFam" id="1.25.40.20:FF:000066">
    <property type="entry name" value="Osteoclast-stimulating factor 1"/>
    <property type="match status" value="1"/>
</dbReference>
<dbReference type="FunFam" id="2.30.30.40:FF:000158">
    <property type="entry name" value="Osteoclast-stimulating factor 1"/>
    <property type="match status" value="1"/>
</dbReference>
<dbReference type="Gene3D" id="1.25.40.20">
    <property type="entry name" value="Ankyrin repeat-containing domain"/>
    <property type="match status" value="1"/>
</dbReference>
<dbReference type="Gene3D" id="2.30.30.40">
    <property type="entry name" value="SH3 Domains"/>
    <property type="match status" value="1"/>
</dbReference>
<dbReference type="InterPro" id="IPR002110">
    <property type="entry name" value="Ankyrin_rpt"/>
</dbReference>
<dbReference type="InterPro" id="IPR036770">
    <property type="entry name" value="Ankyrin_rpt-contain_sf"/>
</dbReference>
<dbReference type="InterPro" id="IPR036028">
    <property type="entry name" value="SH3-like_dom_sf"/>
</dbReference>
<dbReference type="InterPro" id="IPR001452">
    <property type="entry name" value="SH3_domain"/>
</dbReference>
<dbReference type="PANTHER" id="PTHR24155">
    <property type="entry name" value="OSTEOCLAST-STIMULATING FACTOR 1"/>
    <property type="match status" value="1"/>
</dbReference>
<dbReference type="PANTHER" id="PTHR24155:SF10">
    <property type="entry name" value="OSTEOCLAST-STIMULATING FACTOR 1"/>
    <property type="match status" value="1"/>
</dbReference>
<dbReference type="Pfam" id="PF00023">
    <property type="entry name" value="Ank"/>
    <property type="match status" value="1"/>
</dbReference>
<dbReference type="Pfam" id="PF12796">
    <property type="entry name" value="Ank_2"/>
    <property type="match status" value="1"/>
</dbReference>
<dbReference type="Pfam" id="PF00018">
    <property type="entry name" value="SH3_1"/>
    <property type="match status" value="1"/>
</dbReference>
<dbReference type="PRINTS" id="PR01415">
    <property type="entry name" value="ANKYRIN"/>
</dbReference>
<dbReference type="PRINTS" id="PR00499">
    <property type="entry name" value="P67PHOX"/>
</dbReference>
<dbReference type="PRINTS" id="PR00452">
    <property type="entry name" value="SH3DOMAIN"/>
</dbReference>
<dbReference type="SMART" id="SM00248">
    <property type="entry name" value="ANK"/>
    <property type="match status" value="3"/>
</dbReference>
<dbReference type="SMART" id="SM00326">
    <property type="entry name" value="SH3"/>
    <property type="match status" value="1"/>
</dbReference>
<dbReference type="SUPFAM" id="SSF48403">
    <property type="entry name" value="Ankyrin repeat"/>
    <property type="match status" value="1"/>
</dbReference>
<dbReference type="SUPFAM" id="SSF50044">
    <property type="entry name" value="SH3-domain"/>
    <property type="match status" value="1"/>
</dbReference>
<dbReference type="PROSITE" id="PS50297">
    <property type="entry name" value="ANK_REP_REGION"/>
    <property type="match status" value="1"/>
</dbReference>
<dbReference type="PROSITE" id="PS50088">
    <property type="entry name" value="ANK_REPEAT"/>
    <property type="match status" value="1"/>
</dbReference>
<dbReference type="PROSITE" id="PS50002">
    <property type="entry name" value="SH3"/>
    <property type="match status" value="1"/>
</dbReference>
<name>OSTF1_MOUSE</name>
<protein>
    <recommendedName>
        <fullName>Osteoclast-stimulating factor 1</fullName>
    </recommendedName>
    <alternativeName>
        <fullName>SH3 domain protein 3</fullName>
    </alternativeName>
</protein>
<keyword id="KW-0007">Acetylation</keyword>
<keyword id="KW-0040">ANK repeat</keyword>
<keyword id="KW-0963">Cytoplasm</keyword>
<keyword id="KW-0597">Phosphoprotein</keyword>
<keyword id="KW-1185">Reference proteome</keyword>
<keyword id="KW-0677">Repeat</keyword>
<keyword id="KW-0728">SH3 domain</keyword>